<proteinExistence type="evidence at transcript level"/>
<accession>Q9S515</accession>
<protein>
    <recommendedName>
        <fullName>Pesticidal crystal protein Cry1Ag</fullName>
    </recommendedName>
    <alternativeName>
        <fullName>134 kDa crystal protein</fullName>
    </alternativeName>
    <alternativeName>
        <fullName>Crystaline entomocidal protoxin</fullName>
    </alternativeName>
    <alternativeName>
        <fullName>Insecticidal delta-endotoxin CryIA(g)</fullName>
    </alternativeName>
</protein>
<geneLocation type="plasmid"/>
<reference key="1">
    <citation type="submission" date="1998-07" db="EMBL/GenBank/DDBJ databases">
        <title>Cloning, nucleotide sequence and expression of a new gene encoding lepidopteran-specific toxin.</title>
        <authorList>
            <person name="Mustafa S.A."/>
        </authorList>
    </citation>
    <scope>NUCLEOTIDE SEQUENCE [GENOMIC DNA]</scope>
</reference>
<feature type="chain" id="PRO_0000174028" description="Pesticidal crystal protein Cry1Ag">
    <location>
        <begin position="1"/>
        <end position="1176"/>
    </location>
</feature>
<gene>
    <name type="primary">cry1Ag</name>
    <name type="synonym">cry1</name>
    <name type="synonym">cryIA(g)</name>
</gene>
<organism>
    <name type="scientific">Bacillus thuringiensis</name>
    <dbReference type="NCBI Taxonomy" id="1428"/>
    <lineage>
        <taxon>Bacteria</taxon>
        <taxon>Bacillati</taxon>
        <taxon>Bacillota</taxon>
        <taxon>Bacilli</taxon>
        <taxon>Bacillales</taxon>
        <taxon>Bacillaceae</taxon>
        <taxon>Bacillus</taxon>
        <taxon>Bacillus cereus group</taxon>
    </lineage>
</organism>
<name>CR1AG_BACTU</name>
<keyword id="KW-0614">Plasmid</keyword>
<keyword id="KW-0749">Sporulation</keyword>
<keyword id="KW-0800">Toxin</keyword>
<keyword id="KW-0843">Virulence</keyword>
<sequence length="1176" mass="133394">MDNNPNINECIPYNCLSNPEVEVLGGERIETGYTPIDISLSLTQFLLSEFVPGAGFVLGLVDIIWGIFGPSQWDAFLVQIEQLINQRIEEFARNQAISRLEGLSNLYQIYAESFREWEADPTNPALREEMRIQFNDMNSALTTAIPLLAVQNYQVPLLSVYVQAANLHLSVLRDVSVFGQRWGFDAATINSRYNDLTRLIGNYTDYAVRWYNTGLERVWGPDSRDWVRYNQFRRELTLTVLDIVALFSNYDSRRYPIRTVSQLTREIYTNPVLENFDGSFRGMAQRIEPEYRQPHLMDILNSISIYTDVHRGFNYWSGHQITTSPVGFSGPEFTFPLYGTYGNAAPPQRIAQTGLGIFRTLSSPLYRRIILGSGPNNQELFVLDGTEFSFASLTTNLPSTIYRQRGTVDSLDVIPPQDNSVPPRAGFSHRLSHVPMLSQAAGAVYTLRASLFLLLVLLIHARSIFNNIIPSSQITQSFKKIISWTSVVKGPGFTGGDILRRPSPGLISTLRVNITAPLSQRYRVRIRYAFTTNLQFLTSIDGRPINQGNFYATMSSGSNLQSGSFRTVGFTTPFNFSNGSSVFTLSAHVFNSGNEVYIDRIEFVPAEVTFEAEYDLERAQNGVNQLFTSSNQIGLKTDGTDYHIDQVSNLVECLSDEFCLDEKQELSEKVKHAKRLSDERNLLQDPNFRGINRQLDRGWRGSHDITIQGGDDVFKENYVTLLGTFDECYPTYLYQKIDQSKLKAYTSYQLRGYIEDSQDLEIYLIGYNAKQQTVNVPGTGSLWPVYAPKPIGKCGEPNRCAPHLEWNPDLDCSCRDGEKCAHHSLHFSIDIDVGCTDLNEDLGVWVIFKIKTEDGHARLGNLEFLEEKPLVGEALARVKRAEKKWRDKRVKLEWETNIVYKEAKESVDALFVNSQYDQLQADTNIAMIHAADKRVHSIREAYLPELSVIPGVNAAIFEELEGRIFTAFSLYDARNVIKNGDFNNGLSCWNVKGHVDVEEQNNQRSVLVVPEWEAEVSQEVRVCPGRGYFPRVTAYKEGYGEGCVTIHEIENNTDELKFSNCVEEEIYPNNTVTCNDYTVNQEEYGGAYTSRNRGYNEAPSVPADYASVYEEKSYTDGRRENPCEFNRGYRDYTGLPVGYVTKALEYFPETDKVWIEIGETEGTFIVDSVELLLMEE</sequence>
<evidence type="ECO:0000305" key="1"/>
<evidence type="ECO:0000305" key="2">
    <source ref="1"/>
</evidence>
<comment type="function">
    <text>Promotes colloidosmotic lysis by binding to the midgut epithelial cells of many lepidopteran larvae.</text>
</comment>
<comment type="developmental stage">
    <text>The crystal protein is produced during sporulation and is accumulated both as an inclusion and as part of the spore coat.</text>
</comment>
<comment type="miscellaneous">
    <text>Toxic segment of the protein is located in the N-terminus.</text>
</comment>
<comment type="miscellaneous">
    <text evidence="2">Encoded on an unnamed plasmid.</text>
</comment>
<comment type="similarity">
    <text evidence="1">Belongs to the delta endotoxin family.</text>
</comment>
<dbReference type="EMBL" id="AF081248">
    <property type="protein sequence ID" value="AAD46137.1"/>
    <property type="molecule type" value="Genomic_DNA"/>
</dbReference>
<dbReference type="SMR" id="Q9S515"/>
<dbReference type="GO" id="GO:0005102">
    <property type="term" value="F:signaling receptor binding"/>
    <property type="evidence" value="ECO:0007669"/>
    <property type="project" value="InterPro"/>
</dbReference>
<dbReference type="GO" id="GO:0090729">
    <property type="term" value="F:toxin activity"/>
    <property type="evidence" value="ECO:0007669"/>
    <property type="project" value="UniProtKB-KW"/>
</dbReference>
<dbReference type="GO" id="GO:0030435">
    <property type="term" value="P:sporulation resulting in formation of a cellular spore"/>
    <property type="evidence" value="ECO:0007669"/>
    <property type="project" value="UniProtKB-KW"/>
</dbReference>
<dbReference type="GO" id="GO:0001907">
    <property type="term" value="P:symbiont-mediated killing of host cell"/>
    <property type="evidence" value="ECO:0007669"/>
    <property type="project" value="InterPro"/>
</dbReference>
<dbReference type="CDD" id="cd04085">
    <property type="entry name" value="delta_endotoxin_C"/>
    <property type="match status" value="1"/>
</dbReference>
<dbReference type="Gene3D" id="2.60.120.260">
    <property type="entry name" value="Galactose-binding domain-like"/>
    <property type="match status" value="1"/>
</dbReference>
<dbReference type="Gene3D" id="2.100.10.10">
    <property type="entry name" value="Pesticidal crystal protein, central domain"/>
    <property type="match status" value="1"/>
</dbReference>
<dbReference type="Gene3D" id="1.20.190.10">
    <property type="entry name" value="Pesticidal crystal protein, N-terminal domain"/>
    <property type="match status" value="1"/>
</dbReference>
<dbReference type="InterPro" id="IPR048645">
    <property type="entry name" value="Cry1Ac-like_dom-VII"/>
</dbReference>
<dbReference type="InterPro" id="IPR041587">
    <property type="entry name" value="Cry_V"/>
</dbReference>
<dbReference type="InterPro" id="IPR008979">
    <property type="entry name" value="Galactose-bd-like_sf"/>
</dbReference>
<dbReference type="InterPro" id="IPR038979">
    <property type="entry name" value="Pest_crys"/>
</dbReference>
<dbReference type="InterPro" id="IPR005638">
    <property type="entry name" value="Pest_crys_dom-III"/>
</dbReference>
<dbReference type="InterPro" id="IPR005639">
    <property type="entry name" value="Pest_crys_dom_I"/>
</dbReference>
<dbReference type="InterPro" id="IPR036716">
    <property type="entry name" value="Pest_crys_N_sf"/>
</dbReference>
<dbReference type="InterPro" id="IPR036399">
    <property type="entry name" value="Pest_cryst_cen_dom_sf"/>
</dbReference>
<dbReference type="InterPro" id="IPR001178">
    <property type="entry name" value="Pest_cryst_dom_II"/>
</dbReference>
<dbReference type="PANTHER" id="PTHR37003">
    <property type="entry name" value="ENDOTOXIN_N DOMAIN-CONTAINING PROTEIN-RELATED"/>
    <property type="match status" value="1"/>
</dbReference>
<dbReference type="PANTHER" id="PTHR37003:SF2">
    <property type="entry name" value="PESTICIDAL CRYSTAL PROTEIN N-TERMINAL DOMAIN-CONTAINING PROTEIN"/>
    <property type="match status" value="1"/>
</dbReference>
<dbReference type="Pfam" id="PF17997">
    <property type="entry name" value="Cry1Ac_D5"/>
    <property type="match status" value="1"/>
</dbReference>
<dbReference type="Pfam" id="PF21463">
    <property type="entry name" value="Cry1Ac_dom-VII"/>
    <property type="match status" value="1"/>
</dbReference>
<dbReference type="Pfam" id="PF03944">
    <property type="entry name" value="Endotoxin_C"/>
    <property type="match status" value="1"/>
</dbReference>
<dbReference type="Pfam" id="PF00555">
    <property type="entry name" value="Endotoxin_M"/>
    <property type="match status" value="1"/>
</dbReference>
<dbReference type="Pfam" id="PF03945">
    <property type="entry name" value="Endotoxin_N"/>
    <property type="match status" value="1"/>
</dbReference>
<dbReference type="SUPFAM" id="SSF51096">
    <property type="entry name" value="delta-Endotoxin (insectocide), middle domain"/>
    <property type="match status" value="1"/>
</dbReference>
<dbReference type="SUPFAM" id="SSF56849">
    <property type="entry name" value="delta-Endotoxin (insectocide), N-terminal domain"/>
    <property type="match status" value="1"/>
</dbReference>
<dbReference type="SUPFAM" id="SSF49785">
    <property type="entry name" value="Galactose-binding domain-like"/>
    <property type="match status" value="1"/>
</dbReference>